<keyword id="KW-0469">Meiosis</keyword>
<keyword id="KW-0472">Membrane</keyword>
<keyword id="KW-1185">Reference proteome</keyword>
<keyword id="KW-0812">Transmembrane</keyword>
<keyword id="KW-1133">Transmembrane helix</keyword>
<organism>
    <name type="scientific">Schizosaccharomyces pombe (strain 972 / ATCC 24843)</name>
    <name type="common">Fission yeast</name>
    <dbReference type="NCBI Taxonomy" id="284812"/>
    <lineage>
        <taxon>Eukaryota</taxon>
        <taxon>Fungi</taxon>
        <taxon>Dikarya</taxon>
        <taxon>Ascomycota</taxon>
        <taxon>Taphrinomycotina</taxon>
        <taxon>Schizosaccharomycetes</taxon>
        <taxon>Schizosaccharomycetales</taxon>
        <taxon>Schizosaccharomycetaceae</taxon>
        <taxon>Schizosaccharomyces</taxon>
    </lineage>
</organism>
<proteinExistence type="evidence at protein level"/>
<name>MU110_SCHPO</name>
<sequence>MVESSDENDQASSFASTEDLKELRFVFWFSVLIPIFFIALIIIKRYHSCTYQKNRLLRSIFCCMSIDDEEELETDMYDLPIVEPSITLPKYSASLQENERLVGIEGEREGIDVVLNFSKAGEGGVNPYPSFDTPNARILQLRQLAKLKKHGPRISYHGIGIGRCNGNRVLPPYPEPALLPEAPNTREASNNTYLYGFSNNFINISRTLNLRYPSASASISDSLPPPYQVLSVPSVTSTHAFSNNANQT</sequence>
<reference key="1">
    <citation type="journal article" date="2002" name="Nature">
        <title>The genome sequence of Schizosaccharomyces pombe.</title>
        <authorList>
            <person name="Wood V."/>
            <person name="Gwilliam R."/>
            <person name="Rajandream M.A."/>
            <person name="Lyne M.H."/>
            <person name="Lyne R."/>
            <person name="Stewart A."/>
            <person name="Sgouros J.G."/>
            <person name="Peat N."/>
            <person name="Hayles J."/>
            <person name="Baker S.G."/>
            <person name="Basham D."/>
            <person name="Bowman S."/>
            <person name="Brooks K."/>
            <person name="Brown D."/>
            <person name="Brown S."/>
            <person name="Chillingworth T."/>
            <person name="Churcher C.M."/>
            <person name="Collins M."/>
            <person name="Connor R."/>
            <person name="Cronin A."/>
            <person name="Davis P."/>
            <person name="Feltwell T."/>
            <person name="Fraser A."/>
            <person name="Gentles S."/>
            <person name="Goble A."/>
            <person name="Hamlin N."/>
            <person name="Harris D.E."/>
            <person name="Hidalgo J."/>
            <person name="Hodgson G."/>
            <person name="Holroyd S."/>
            <person name="Hornsby T."/>
            <person name="Howarth S."/>
            <person name="Huckle E.J."/>
            <person name="Hunt S."/>
            <person name="Jagels K."/>
            <person name="James K.D."/>
            <person name="Jones L."/>
            <person name="Jones M."/>
            <person name="Leather S."/>
            <person name="McDonald S."/>
            <person name="McLean J."/>
            <person name="Mooney P."/>
            <person name="Moule S."/>
            <person name="Mungall K.L."/>
            <person name="Murphy L.D."/>
            <person name="Niblett D."/>
            <person name="Odell C."/>
            <person name="Oliver K."/>
            <person name="O'Neil S."/>
            <person name="Pearson D."/>
            <person name="Quail M.A."/>
            <person name="Rabbinowitsch E."/>
            <person name="Rutherford K.M."/>
            <person name="Rutter S."/>
            <person name="Saunders D."/>
            <person name="Seeger K."/>
            <person name="Sharp S."/>
            <person name="Skelton J."/>
            <person name="Simmonds M.N."/>
            <person name="Squares R."/>
            <person name="Squares S."/>
            <person name="Stevens K."/>
            <person name="Taylor K."/>
            <person name="Taylor R.G."/>
            <person name="Tivey A."/>
            <person name="Walsh S.V."/>
            <person name="Warren T."/>
            <person name="Whitehead S."/>
            <person name="Woodward J.R."/>
            <person name="Volckaert G."/>
            <person name="Aert R."/>
            <person name="Robben J."/>
            <person name="Grymonprez B."/>
            <person name="Weltjens I."/>
            <person name="Vanstreels E."/>
            <person name="Rieger M."/>
            <person name="Schaefer M."/>
            <person name="Mueller-Auer S."/>
            <person name="Gabel C."/>
            <person name="Fuchs M."/>
            <person name="Duesterhoeft A."/>
            <person name="Fritzc C."/>
            <person name="Holzer E."/>
            <person name="Moestl D."/>
            <person name="Hilbert H."/>
            <person name="Borzym K."/>
            <person name="Langer I."/>
            <person name="Beck A."/>
            <person name="Lehrach H."/>
            <person name="Reinhardt R."/>
            <person name="Pohl T.M."/>
            <person name="Eger P."/>
            <person name="Zimmermann W."/>
            <person name="Wedler H."/>
            <person name="Wambutt R."/>
            <person name="Purnelle B."/>
            <person name="Goffeau A."/>
            <person name="Cadieu E."/>
            <person name="Dreano S."/>
            <person name="Gloux S."/>
            <person name="Lelaure V."/>
            <person name="Mottier S."/>
            <person name="Galibert F."/>
            <person name="Aves S.J."/>
            <person name="Xiang Z."/>
            <person name="Hunt C."/>
            <person name="Moore K."/>
            <person name="Hurst S.M."/>
            <person name="Lucas M."/>
            <person name="Rochet M."/>
            <person name="Gaillardin C."/>
            <person name="Tallada V.A."/>
            <person name="Garzon A."/>
            <person name="Thode G."/>
            <person name="Daga R.R."/>
            <person name="Cruzado L."/>
            <person name="Jimenez J."/>
            <person name="Sanchez M."/>
            <person name="del Rey F."/>
            <person name="Benito J."/>
            <person name="Dominguez A."/>
            <person name="Revuelta J.L."/>
            <person name="Moreno S."/>
            <person name="Armstrong J."/>
            <person name="Forsburg S.L."/>
            <person name="Cerutti L."/>
            <person name="Lowe T."/>
            <person name="McCombie W.R."/>
            <person name="Paulsen I."/>
            <person name="Potashkin J."/>
            <person name="Shpakovski G.V."/>
            <person name="Ussery D."/>
            <person name="Barrell B.G."/>
            <person name="Nurse P."/>
        </authorList>
    </citation>
    <scope>NUCLEOTIDE SEQUENCE [LARGE SCALE GENOMIC DNA]</scope>
    <source>
        <strain>972 / ATCC 24843</strain>
    </source>
</reference>
<reference key="2">
    <citation type="journal article" date="2005" name="Curr. Biol.">
        <title>A large-scale screen in S. pombe identifies seven novel genes required for critical meiotic events.</title>
        <authorList>
            <person name="Martin-Castellanos C."/>
            <person name="Blanco M."/>
            <person name="Rozalen A.E."/>
            <person name="Perez-Hidalgo L."/>
            <person name="Garcia A.I."/>
            <person name="Conde F."/>
            <person name="Mata J."/>
            <person name="Ellermeier C."/>
            <person name="Davis L."/>
            <person name="San-Segundo P."/>
            <person name="Smith G.R."/>
            <person name="Moreno S."/>
        </authorList>
    </citation>
    <scope>FUNCTION IN MEIOSIS</scope>
</reference>
<reference key="3">
    <citation type="journal article" date="2006" name="Nat. Biotechnol.">
        <title>ORFeome cloning and global analysis of protein localization in the fission yeast Schizosaccharomyces pombe.</title>
        <authorList>
            <person name="Matsuyama A."/>
            <person name="Arai R."/>
            <person name="Yashiroda Y."/>
            <person name="Shirai A."/>
            <person name="Kamata A."/>
            <person name="Sekido S."/>
            <person name="Kobayashi Y."/>
            <person name="Hashimoto A."/>
            <person name="Hamamoto M."/>
            <person name="Hiraoka Y."/>
            <person name="Horinouchi S."/>
            <person name="Yoshida M."/>
        </authorList>
    </citation>
    <scope>SUBCELLULAR LOCATION [LARGE SCALE ANALYSIS]</scope>
</reference>
<dbReference type="EMBL" id="CU329671">
    <property type="protein sequence ID" value="CAA17890.1"/>
    <property type="molecule type" value="Genomic_DNA"/>
</dbReference>
<dbReference type="PIR" id="T40149">
    <property type="entry name" value="T40149"/>
</dbReference>
<dbReference type="RefSeq" id="NP_596439.1">
    <property type="nucleotide sequence ID" value="NM_001022358.1"/>
</dbReference>
<dbReference type="SMR" id="O43009"/>
<dbReference type="BioGRID" id="276880">
    <property type="interactions" value="6"/>
</dbReference>
<dbReference type="STRING" id="284812.O43009"/>
<dbReference type="PaxDb" id="4896-SPBC2G2.10c.1"/>
<dbReference type="EnsemblFungi" id="SPBC2G2.10c.1">
    <property type="protein sequence ID" value="SPBC2G2.10c.1:pep"/>
    <property type="gene ID" value="SPBC2G2.10c"/>
</dbReference>
<dbReference type="GeneID" id="2540351"/>
<dbReference type="KEGG" id="spo:2540351"/>
<dbReference type="PomBase" id="SPBC2G2.10c">
    <property type="gene designation" value="mug110"/>
</dbReference>
<dbReference type="VEuPathDB" id="FungiDB:SPBC2G2.10c"/>
<dbReference type="HOGENOM" id="CLU_1120670_0_0_1"/>
<dbReference type="InParanoid" id="O43009"/>
<dbReference type="OMA" id="FIQRMEI"/>
<dbReference type="PRO" id="PR:O43009"/>
<dbReference type="Proteomes" id="UP000002485">
    <property type="component" value="Chromosome II"/>
</dbReference>
<dbReference type="GO" id="GO:0032153">
    <property type="term" value="C:cell division site"/>
    <property type="evidence" value="ECO:0007005"/>
    <property type="project" value="PomBase"/>
</dbReference>
<dbReference type="GO" id="GO:0051286">
    <property type="term" value="C:cell tip"/>
    <property type="evidence" value="ECO:0007005"/>
    <property type="project" value="PomBase"/>
</dbReference>
<dbReference type="GO" id="GO:0005737">
    <property type="term" value="C:cytoplasm"/>
    <property type="evidence" value="ECO:0007005"/>
    <property type="project" value="PomBase"/>
</dbReference>
<dbReference type="GO" id="GO:0016020">
    <property type="term" value="C:membrane"/>
    <property type="evidence" value="ECO:0007669"/>
    <property type="project" value="UniProtKB-SubCell"/>
</dbReference>
<dbReference type="GO" id="GO:0051321">
    <property type="term" value="P:meiotic cell cycle"/>
    <property type="evidence" value="ECO:0007669"/>
    <property type="project" value="UniProtKB-KW"/>
</dbReference>
<feature type="chain" id="PRO_0000278621" description="Meiotically up-regulated gene 110 protein">
    <location>
        <begin position="1"/>
        <end position="248"/>
    </location>
</feature>
<feature type="transmembrane region" description="Helical" evidence="1">
    <location>
        <begin position="23"/>
        <end position="43"/>
    </location>
</feature>
<evidence type="ECO:0000255" key="1"/>
<evidence type="ECO:0000269" key="2">
    <source>
    </source>
</evidence>
<evidence type="ECO:0000269" key="3">
    <source>
    </source>
</evidence>
<comment type="function">
    <text evidence="2">Has a role in meiosis.</text>
</comment>
<comment type="subcellular location">
    <subcellularLocation>
        <location evidence="3">Membrane</location>
        <topology evidence="3">Single-pass membrane protein</topology>
    </subcellularLocation>
    <text>Localizes to the barrier septum and cell tip.</text>
</comment>
<gene>
    <name type="primary">mug110</name>
    <name type="ORF">SPBC2G2.10c</name>
</gene>
<accession>O43009</accession>
<protein>
    <recommendedName>
        <fullName>Meiotically up-regulated gene 110 protein</fullName>
    </recommendedName>
</protein>